<organism>
    <name type="scientific">Metridium senile</name>
    <name type="common">Brown sea anemone</name>
    <name type="synonym">Frilled sea anemone</name>
    <dbReference type="NCBI Taxonomy" id="6116"/>
    <lineage>
        <taxon>Eukaryota</taxon>
        <taxon>Metazoa</taxon>
        <taxon>Cnidaria</taxon>
        <taxon>Anthozoa</taxon>
        <taxon>Hexacorallia</taxon>
        <taxon>Actiniaria</taxon>
        <taxon>Nynantheae</taxon>
        <taxon>Metridiidae</taxon>
        <taxon>Metridium</taxon>
    </lineage>
</organism>
<dbReference type="EC" id="7.1.1.2"/>
<dbReference type="EMBL" id="S75445">
    <property type="protein sequence ID" value="AAB32500.1"/>
    <property type="molecule type" value="Genomic_DNA"/>
</dbReference>
<dbReference type="EMBL" id="AF000023">
    <property type="protein sequence ID" value="AAC04641.1"/>
    <property type="molecule type" value="Genomic_DNA"/>
</dbReference>
<dbReference type="PIR" id="T11895">
    <property type="entry name" value="T11895"/>
</dbReference>
<dbReference type="RefSeq" id="NP_009264.1">
    <property type="nucleotide sequence ID" value="NC_000933.1"/>
</dbReference>
<dbReference type="SMR" id="O47498"/>
<dbReference type="GeneID" id="808780"/>
<dbReference type="CTD" id="4541"/>
<dbReference type="GO" id="GO:0031966">
    <property type="term" value="C:mitochondrial membrane"/>
    <property type="evidence" value="ECO:0007669"/>
    <property type="project" value="UniProtKB-SubCell"/>
</dbReference>
<dbReference type="GO" id="GO:0008137">
    <property type="term" value="F:NADH dehydrogenase (ubiquinone) activity"/>
    <property type="evidence" value="ECO:0007669"/>
    <property type="project" value="UniProtKB-EC"/>
</dbReference>
<dbReference type="Gene3D" id="1.20.120.1200">
    <property type="entry name" value="NADH-ubiquinone/plastoquinone oxidoreductase chain 6, subunit NuoJ"/>
    <property type="match status" value="1"/>
</dbReference>
<dbReference type="InterPro" id="IPR001457">
    <property type="entry name" value="NADH_UbQ/plastoQ_OxRdtase_su6"/>
</dbReference>
<dbReference type="InterPro" id="IPR042106">
    <property type="entry name" value="Nuo/plastoQ_OxRdtase_6_NuoJ"/>
</dbReference>
<dbReference type="PANTHER" id="PTHR33269">
    <property type="entry name" value="NADH-UBIQUINONE OXIDOREDUCTASE CHAIN 6"/>
    <property type="match status" value="1"/>
</dbReference>
<dbReference type="PANTHER" id="PTHR33269:SF17">
    <property type="entry name" value="NADH-UBIQUINONE OXIDOREDUCTASE CHAIN 6"/>
    <property type="match status" value="1"/>
</dbReference>
<dbReference type="Pfam" id="PF00499">
    <property type="entry name" value="Oxidored_q3"/>
    <property type="match status" value="1"/>
</dbReference>
<gene>
    <name type="primary">ND6</name>
</gene>
<reference key="1">
    <citation type="journal article" date="1994" name="J. Mol. Evol.">
        <title>Mitochondrial DNA of the sea anemone, Metridium senile (Cnidaria): prokaryote-like genes for tRNA(f-Met) and small-subunit ribosomal RNA, and standard genetic code specificities for AGR and ATA codons.</title>
        <authorList>
            <person name="Pont-Kingdon G.A."/>
            <person name="Beagley C.T."/>
            <person name="Okimoto R."/>
            <person name="Wolstenholme D.R."/>
        </authorList>
    </citation>
    <scope>NUCLEOTIDE SEQUENCE [GENOMIC DNA]</scope>
</reference>
<reference key="2">
    <citation type="submission" date="1997-04" db="EMBL/GenBank/DDBJ databases">
        <authorList>
            <person name="Beagley C.T."/>
            <person name="Okimoto R."/>
            <person name="Wolstenholme D.R."/>
        </authorList>
    </citation>
    <scope>NUCLEOTIDE SEQUENCE [GENOMIC DNA]</scope>
    <source>
        <strain>White morph</strain>
    </source>
</reference>
<protein>
    <recommendedName>
        <fullName>NADH-ubiquinone oxidoreductase chain 6</fullName>
        <ecNumber>7.1.1.2</ecNumber>
    </recommendedName>
    <alternativeName>
        <fullName>NADH dehydrogenase subunit 6</fullName>
    </alternativeName>
</protein>
<proteinExistence type="inferred from homology"/>
<comment type="function">
    <text evidence="1">Core subunit of the mitochondrial membrane respiratory chain NADH dehydrogenase (Complex I) that is believed to belong to the minimal assembly required for catalysis. Complex I functions in the transfer of electrons from NADH to the respiratory chain. The immediate electron acceptor for the enzyme is believed to be ubiquinone (By similarity).</text>
</comment>
<comment type="catalytic activity">
    <reaction>
        <text>a ubiquinone + NADH + 5 H(+)(in) = a ubiquinol + NAD(+) + 4 H(+)(out)</text>
        <dbReference type="Rhea" id="RHEA:29091"/>
        <dbReference type="Rhea" id="RHEA-COMP:9565"/>
        <dbReference type="Rhea" id="RHEA-COMP:9566"/>
        <dbReference type="ChEBI" id="CHEBI:15378"/>
        <dbReference type="ChEBI" id="CHEBI:16389"/>
        <dbReference type="ChEBI" id="CHEBI:17976"/>
        <dbReference type="ChEBI" id="CHEBI:57540"/>
        <dbReference type="ChEBI" id="CHEBI:57945"/>
        <dbReference type="EC" id="7.1.1.2"/>
    </reaction>
</comment>
<comment type="subcellular location">
    <subcellularLocation>
        <location evidence="3">Mitochondrion membrane</location>
        <topology evidence="3">Multi-pass membrane protein</topology>
    </subcellularLocation>
</comment>
<comment type="similarity">
    <text evidence="3">Belongs to the complex I subunit 6 family.</text>
</comment>
<keyword id="KW-0249">Electron transport</keyword>
<keyword id="KW-0472">Membrane</keyword>
<keyword id="KW-0496">Mitochondrion</keyword>
<keyword id="KW-0520">NAD</keyword>
<keyword id="KW-0679">Respiratory chain</keyword>
<keyword id="KW-1278">Translocase</keyword>
<keyword id="KW-0812">Transmembrane</keyword>
<keyword id="KW-1133">Transmembrane helix</keyword>
<keyword id="KW-0813">Transport</keyword>
<keyword id="KW-0830">Ubiquinone</keyword>
<name>NU6M_METSE</name>
<accession>O47498</accession>
<accession>Q26383</accession>
<sequence length="202" mass="22369">MVTMYFFTLSFGTVASGIMVISALNPVHSVFWLVVAFISSAALFILLGVDFIALMFIIIYVGAIAILFLFVIMMLNLTDFTPAFRRGGEADMTNYVPIGLAVGTLFFEAIASSWLIMGGPYVYRGLLGAWDLANPWFLKKYHNIEAIGRILYTDCYYLFILVSFILLVAMLGAIVLTQEIGTEIGPTAKKQDIFVQTSRAQV</sequence>
<evidence type="ECO:0000250" key="1"/>
<evidence type="ECO:0000255" key="2"/>
<evidence type="ECO:0000305" key="3"/>
<geneLocation type="mitochondrion"/>
<feature type="chain" id="PRO_0000118303" description="NADH-ubiquinone oxidoreductase chain 6">
    <location>
        <begin position="1"/>
        <end position="202"/>
    </location>
</feature>
<feature type="transmembrane region" description="Helical" evidence="2">
    <location>
        <begin position="1"/>
        <end position="21"/>
    </location>
</feature>
<feature type="transmembrane region" description="Helical" evidence="2">
    <location>
        <begin position="29"/>
        <end position="49"/>
    </location>
</feature>
<feature type="transmembrane region" description="Helical" evidence="2">
    <location>
        <begin position="52"/>
        <end position="72"/>
    </location>
</feature>
<feature type="transmembrane region" description="Helical" evidence="2">
    <location>
        <begin position="96"/>
        <end position="116"/>
    </location>
</feature>
<feature type="transmembrane region" description="Helical" evidence="2">
    <location>
        <begin position="156"/>
        <end position="176"/>
    </location>
</feature>